<evidence type="ECO:0000255" key="1">
    <source>
        <dbReference type="HAMAP-Rule" id="MF_01501"/>
    </source>
</evidence>
<feature type="chain" id="PRO_1000024472" description="Tetrahydromethanopterin S-methyltransferase subunit H">
    <location>
        <begin position="1"/>
        <end position="319"/>
    </location>
</feature>
<keyword id="KW-0484">Methanogenesis</keyword>
<keyword id="KW-0489">Methyltransferase</keyword>
<keyword id="KW-0554">One-carbon metabolism</keyword>
<keyword id="KW-0808">Transferase</keyword>
<keyword id="KW-1278">Translocase</keyword>
<proteinExistence type="inferred from homology"/>
<dbReference type="EC" id="7.2.1.4" evidence="1"/>
<dbReference type="EMBL" id="CP000609">
    <property type="protein sequence ID" value="ABO34326.1"/>
    <property type="molecule type" value="Genomic_DNA"/>
</dbReference>
<dbReference type="RefSeq" id="WP_011867788.1">
    <property type="nucleotide sequence ID" value="NC_009135.1"/>
</dbReference>
<dbReference type="SMR" id="A4FVV8"/>
<dbReference type="STRING" id="402880.MmarC5_0009"/>
<dbReference type="DNASU" id="4928534"/>
<dbReference type="GeneID" id="4928534"/>
<dbReference type="KEGG" id="mmq:MmarC5_0009"/>
<dbReference type="eggNOG" id="arCOG04336">
    <property type="taxonomic scope" value="Archaea"/>
</dbReference>
<dbReference type="HOGENOM" id="CLU_048697_0_0_2"/>
<dbReference type="OrthoDB" id="18811at2157"/>
<dbReference type="UniPathway" id="UPA00640">
    <property type="reaction ID" value="UER00698"/>
</dbReference>
<dbReference type="Proteomes" id="UP000000253">
    <property type="component" value="Chromosome"/>
</dbReference>
<dbReference type="GO" id="GO:0030269">
    <property type="term" value="F:tetrahydromethanopterin S-methyltransferase activity"/>
    <property type="evidence" value="ECO:0007669"/>
    <property type="project" value="UniProtKB-UniRule"/>
</dbReference>
<dbReference type="GO" id="GO:0019386">
    <property type="term" value="P:methanogenesis, from carbon dioxide"/>
    <property type="evidence" value="ECO:0007669"/>
    <property type="project" value="UniProtKB-UniRule"/>
</dbReference>
<dbReference type="GO" id="GO:0032259">
    <property type="term" value="P:methylation"/>
    <property type="evidence" value="ECO:0007669"/>
    <property type="project" value="UniProtKB-KW"/>
</dbReference>
<dbReference type="GO" id="GO:0006730">
    <property type="term" value="P:one-carbon metabolic process"/>
    <property type="evidence" value="ECO:0007669"/>
    <property type="project" value="UniProtKB-UniRule"/>
</dbReference>
<dbReference type="Gene3D" id="3.20.20.20">
    <property type="entry name" value="Dihydropteroate synthase-like"/>
    <property type="match status" value="1"/>
</dbReference>
<dbReference type="HAMAP" id="MF_01501">
    <property type="entry name" value="MtrH"/>
    <property type="match status" value="1"/>
</dbReference>
<dbReference type="InterPro" id="IPR011005">
    <property type="entry name" value="Dihydropteroate_synth-like_sf"/>
</dbReference>
<dbReference type="InterPro" id="IPR023467">
    <property type="entry name" value="MeTrfase_MtrH/MtxH"/>
</dbReference>
<dbReference type="InterPro" id="IPR028342">
    <property type="entry name" value="MtrH"/>
</dbReference>
<dbReference type="NCBIfam" id="TIGR01114">
    <property type="entry name" value="mtrH"/>
    <property type="match status" value="1"/>
</dbReference>
<dbReference type="Pfam" id="PF02007">
    <property type="entry name" value="MtrH"/>
    <property type="match status" value="1"/>
</dbReference>
<dbReference type="PIRSF" id="PIRSF500206">
    <property type="entry name" value="MtrH"/>
    <property type="match status" value="1"/>
</dbReference>
<dbReference type="PIRSF" id="PIRSF004960">
    <property type="entry name" value="MtrH_MtxH"/>
    <property type="match status" value="1"/>
</dbReference>
<dbReference type="SUPFAM" id="SSF51717">
    <property type="entry name" value="Dihydropteroate synthetase-like"/>
    <property type="match status" value="1"/>
</dbReference>
<sequence length="319" mass="34296">MFRFDKEQMVIEFAGAKFGGQPGEYPTALSGTIFYARHKIVEDAKKGIFDKKAAEALINKQAEMQDITGNSAFVQVFGGTEEALVNYIDFVSEVWDGPMLLDSTSGKARMAAANRATEAGYAKQCVYNSINVAAEDEEIENLTNSDVEASIVLCFDPMDPSVGGKLNVLNDGGKTKDIGMLELAEKAGIKYPLIDVAVTPMGNGAGHAVRASFAVKAKLGLPVGSGIHNVPSAWDWLREFRKGLREEGKDQISKDVHHVCDIGANIVQTMASGDYVLYGPIDNAELAFPAVAMTDMIIAETAKEMGTATVAEHPLNKLI</sequence>
<gene>
    <name evidence="1" type="primary">mtrH</name>
    <name type="ordered locus">MmarC5_0009</name>
</gene>
<organism>
    <name type="scientific">Methanococcus maripaludis (strain C5 / ATCC BAA-1333)</name>
    <dbReference type="NCBI Taxonomy" id="402880"/>
    <lineage>
        <taxon>Archaea</taxon>
        <taxon>Methanobacteriati</taxon>
        <taxon>Methanobacteriota</taxon>
        <taxon>Methanomada group</taxon>
        <taxon>Methanococci</taxon>
        <taxon>Methanococcales</taxon>
        <taxon>Methanococcaceae</taxon>
        <taxon>Methanococcus</taxon>
    </lineage>
</organism>
<protein>
    <recommendedName>
        <fullName evidence="1">Tetrahydromethanopterin S-methyltransferase subunit H</fullName>
        <ecNumber evidence="1">7.2.1.4</ecNumber>
    </recommendedName>
    <alternativeName>
        <fullName evidence="1">N5-methyltetrahydromethanopterin--coenzyme M methyltransferase subunit H</fullName>
    </alternativeName>
</protein>
<accession>A4FVV8</accession>
<comment type="function">
    <text evidence="1">Part of a complex that catalyzes the formation of methyl-coenzyme M and tetrahydromethanopterin from coenzyme M and methyl-tetrahydromethanopterin. This is an energy-conserving, sodium-ion translocating step. MtrH catalyzes the transfer of the methyl group from methyl-tetrahydromethanopterin to the corrinoid prosthetic group of MtrA.</text>
</comment>
<comment type="catalytic activity">
    <reaction evidence="1">
        <text>5-methyl-5,6,7,8-tetrahydromethanopterin + coenzyme M + 2 Na(+)(in) = 5,6,7,8-tetrahydromethanopterin + methyl-coenzyme M + 2 Na(+)(out)</text>
        <dbReference type="Rhea" id="RHEA:53492"/>
        <dbReference type="ChEBI" id="CHEBI:29101"/>
        <dbReference type="ChEBI" id="CHEBI:58103"/>
        <dbReference type="ChEBI" id="CHEBI:58116"/>
        <dbReference type="ChEBI" id="CHEBI:58286"/>
        <dbReference type="ChEBI" id="CHEBI:58319"/>
        <dbReference type="EC" id="7.2.1.4"/>
    </reaction>
</comment>
<comment type="pathway">
    <text evidence="1">One-carbon metabolism; methanogenesis from CO(2); methyl-coenzyme M from 5,10-methylene-5,6,7,8-tetrahydromethanopterin: step 2/2.</text>
</comment>
<comment type="subunit">
    <text evidence="1">The complex is composed of 8 subunits; MtrA, MtrB, MtrC, MtrD, MtrE, MtrF, MtrG and MtrH.</text>
</comment>
<comment type="similarity">
    <text evidence="1">Belongs to the MtrH family.</text>
</comment>
<name>MTRH_METM5</name>
<reference key="1">
    <citation type="submission" date="2007-03" db="EMBL/GenBank/DDBJ databases">
        <title>Complete sequence of chromosome of Methanococcus maripaludis C5.</title>
        <authorList>
            <consortium name="US DOE Joint Genome Institute"/>
            <person name="Copeland A."/>
            <person name="Lucas S."/>
            <person name="Lapidus A."/>
            <person name="Barry K."/>
            <person name="Glavina del Rio T."/>
            <person name="Dalin E."/>
            <person name="Tice H."/>
            <person name="Pitluck S."/>
            <person name="Chertkov O."/>
            <person name="Brettin T."/>
            <person name="Bruce D."/>
            <person name="Han C."/>
            <person name="Detter J.C."/>
            <person name="Schmutz J."/>
            <person name="Larimer F."/>
            <person name="Land M."/>
            <person name="Hauser L."/>
            <person name="Kyrpides N."/>
            <person name="Mikhailova N."/>
            <person name="Sieprawska-Lupa M."/>
            <person name="Whitman W.B."/>
            <person name="Richardson P."/>
        </authorList>
    </citation>
    <scope>NUCLEOTIDE SEQUENCE [LARGE SCALE GENOMIC DNA]</scope>
    <source>
        <strain>C5 / ATCC BAA-1333</strain>
    </source>
</reference>